<protein>
    <recommendedName>
        <fullName evidence="1">4-hydroxy-3-methylbut-2-enyl diphosphate reductase</fullName>
        <shortName evidence="1">HMBPP reductase</shortName>
        <ecNumber evidence="1">1.17.7.4</ecNumber>
    </recommendedName>
</protein>
<feature type="chain" id="PRO_0000128789" description="4-hydroxy-3-methylbut-2-enyl diphosphate reductase">
    <location>
        <begin position="1"/>
        <end position="319"/>
    </location>
</feature>
<feature type="active site" description="Proton donor" evidence="1">
    <location>
        <position position="126"/>
    </location>
</feature>
<feature type="binding site" evidence="1">
    <location>
        <position position="12"/>
    </location>
    <ligand>
        <name>[4Fe-4S] cluster</name>
        <dbReference type="ChEBI" id="CHEBI:49883"/>
    </ligand>
</feature>
<feature type="binding site" evidence="1">
    <location>
        <position position="41"/>
    </location>
    <ligand>
        <name>(2E)-4-hydroxy-3-methylbut-2-enyl diphosphate</name>
        <dbReference type="ChEBI" id="CHEBI:128753"/>
    </ligand>
</feature>
<feature type="binding site" evidence="1">
    <location>
        <position position="41"/>
    </location>
    <ligand>
        <name>dimethylallyl diphosphate</name>
        <dbReference type="ChEBI" id="CHEBI:57623"/>
    </ligand>
</feature>
<feature type="binding site" evidence="1">
    <location>
        <position position="41"/>
    </location>
    <ligand>
        <name>isopentenyl diphosphate</name>
        <dbReference type="ChEBI" id="CHEBI:128769"/>
    </ligand>
</feature>
<feature type="binding site" evidence="1">
    <location>
        <position position="74"/>
    </location>
    <ligand>
        <name>(2E)-4-hydroxy-3-methylbut-2-enyl diphosphate</name>
        <dbReference type="ChEBI" id="CHEBI:128753"/>
    </ligand>
</feature>
<feature type="binding site" evidence="1">
    <location>
        <position position="74"/>
    </location>
    <ligand>
        <name>dimethylallyl diphosphate</name>
        <dbReference type="ChEBI" id="CHEBI:57623"/>
    </ligand>
</feature>
<feature type="binding site" evidence="1">
    <location>
        <position position="74"/>
    </location>
    <ligand>
        <name>isopentenyl diphosphate</name>
        <dbReference type="ChEBI" id="CHEBI:128769"/>
    </ligand>
</feature>
<feature type="binding site" evidence="1">
    <location>
        <position position="96"/>
    </location>
    <ligand>
        <name>[4Fe-4S] cluster</name>
        <dbReference type="ChEBI" id="CHEBI:49883"/>
    </ligand>
</feature>
<feature type="binding site" evidence="1">
    <location>
        <position position="124"/>
    </location>
    <ligand>
        <name>(2E)-4-hydroxy-3-methylbut-2-enyl diphosphate</name>
        <dbReference type="ChEBI" id="CHEBI:128753"/>
    </ligand>
</feature>
<feature type="binding site" evidence="1">
    <location>
        <position position="124"/>
    </location>
    <ligand>
        <name>dimethylallyl diphosphate</name>
        <dbReference type="ChEBI" id="CHEBI:57623"/>
    </ligand>
</feature>
<feature type="binding site" evidence="1">
    <location>
        <position position="124"/>
    </location>
    <ligand>
        <name>isopentenyl diphosphate</name>
        <dbReference type="ChEBI" id="CHEBI:128769"/>
    </ligand>
</feature>
<feature type="binding site" evidence="1">
    <location>
        <position position="167"/>
    </location>
    <ligand>
        <name>(2E)-4-hydroxy-3-methylbut-2-enyl diphosphate</name>
        <dbReference type="ChEBI" id="CHEBI:128753"/>
    </ligand>
</feature>
<feature type="binding site" evidence="1">
    <location>
        <position position="197"/>
    </location>
    <ligand>
        <name>[4Fe-4S] cluster</name>
        <dbReference type="ChEBI" id="CHEBI:49883"/>
    </ligand>
</feature>
<feature type="binding site" evidence="1">
    <location>
        <position position="225"/>
    </location>
    <ligand>
        <name>(2E)-4-hydroxy-3-methylbut-2-enyl diphosphate</name>
        <dbReference type="ChEBI" id="CHEBI:128753"/>
    </ligand>
</feature>
<feature type="binding site" evidence="1">
    <location>
        <position position="225"/>
    </location>
    <ligand>
        <name>dimethylallyl diphosphate</name>
        <dbReference type="ChEBI" id="CHEBI:57623"/>
    </ligand>
</feature>
<feature type="binding site" evidence="1">
    <location>
        <position position="225"/>
    </location>
    <ligand>
        <name>isopentenyl diphosphate</name>
        <dbReference type="ChEBI" id="CHEBI:128769"/>
    </ligand>
</feature>
<feature type="binding site" evidence="1">
    <location>
        <position position="226"/>
    </location>
    <ligand>
        <name>(2E)-4-hydroxy-3-methylbut-2-enyl diphosphate</name>
        <dbReference type="ChEBI" id="CHEBI:128753"/>
    </ligand>
</feature>
<feature type="binding site" evidence="1">
    <location>
        <position position="226"/>
    </location>
    <ligand>
        <name>dimethylallyl diphosphate</name>
        <dbReference type="ChEBI" id="CHEBI:57623"/>
    </ligand>
</feature>
<feature type="binding site" evidence="1">
    <location>
        <position position="226"/>
    </location>
    <ligand>
        <name>isopentenyl diphosphate</name>
        <dbReference type="ChEBI" id="CHEBI:128769"/>
    </ligand>
</feature>
<feature type="binding site" evidence="1">
    <location>
        <position position="227"/>
    </location>
    <ligand>
        <name>(2E)-4-hydroxy-3-methylbut-2-enyl diphosphate</name>
        <dbReference type="ChEBI" id="CHEBI:128753"/>
    </ligand>
</feature>
<feature type="binding site" evidence="1">
    <location>
        <position position="227"/>
    </location>
    <ligand>
        <name>dimethylallyl diphosphate</name>
        <dbReference type="ChEBI" id="CHEBI:57623"/>
    </ligand>
</feature>
<feature type="binding site" evidence="1">
    <location>
        <position position="227"/>
    </location>
    <ligand>
        <name>isopentenyl diphosphate</name>
        <dbReference type="ChEBI" id="CHEBI:128769"/>
    </ligand>
</feature>
<feature type="binding site" evidence="1">
    <location>
        <position position="269"/>
    </location>
    <ligand>
        <name>(2E)-4-hydroxy-3-methylbut-2-enyl diphosphate</name>
        <dbReference type="ChEBI" id="CHEBI:128753"/>
    </ligand>
</feature>
<feature type="binding site" evidence="1">
    <location>
        <position position="269"/>
    </location>
    <ligand>
        <name>dimethylallyl diphosphate</name>
        <dbReference type="ChEBI" id="CHEBI:57623"/>
    </ligand>
</feature>
<feature type="binding site" evidence="1">
    <location>
        <position position="269"/>
    </location>
    <ligand>
        <name>isopentenyl diphosphate</name>
        <dbReference type="ChEBI" id="CHEBI:128769"/>
    </ligand>
</feature>
<name>ISPH_BUCAI</name>
<comment type="function">
    <text evidence="1">Catalyzes the conversion of 1-hydroxy-2-methyl-2-(E)-butenyl 4-diphosphate (HMBPP) into a mixture of isopentenyl diphosphate (IPP) and dimethylallyl diphosphate (DMAPP). Acts in the terminal step of the DOXP/MEP pathway for isoprenoid precursor biosynthesis.</text>
</comment>
<comment type="catalytic activity">
    <reaction evidence="1">
        <text>isopentenyl diphosphate + 2 oxidized [2Fe-2S]-[ferredoxin] + H2O = (2E)-4-hydroxy-3-methylbut-2-enyl diphosphate + 2 reduced [2Fe-2S]-[ferredoxin] + 2 H(+)</text>
        <dbReference type="Rhea" id="RHEA:24488"/>
        <dbReference type="Rhea" id="RHEA-COMP:10000"/>
        <dbReference type="Rhea" id="RHEA-COMP:10001"/>
        <dbReference type="ChEBI" id="CHEBI:15377"/>
        <dbReference type="ChEBI" id="CHEBI:15378"/>
        <dbReference type="ChEBI" id="CHEBI:33737"/>
        <dbReference type="ChEBI" id="CHEBI:33738"/>
        <dbReference type="ChEBI" id="CHEBI:128753"/>
        <dbReference type="ChEBI" id="CHEBI:128769"/>
        <dbReference type="EC" id="1.17.7.4"/>
    </reaction>
</comment>
<comment type="catalytic activity">
    <reaction evidence="1">
        <text>dimethylallyl diphosphate + 2 oxidized [2Fe-2S]-[ferredoxin] + H2O = (2E)-4-hydroxy-3-methylbut-2-enyl diphosphate + 2 reduced [2Fe-2S]-[ferredoxin] + 2 H(+)</text>
        <dbReference type="Rhea" id="RHEA:24825"/>
        <dbReference type="Rhea" id="RHEA-COMP:10000"/>
        <dbReference type="Rhea" id="RHEA-COMP:10001"/>
        <dbReference type="ChEBI" id="CHEBI:15377"/>
        <dbReference type="ChEBI" id="CHEBI:15378"/>
        <dbReference type="ChEBI" id="CHEBI:33737"/>
        <dbReference type="ChEBI" id="CHEBI:33738"/>
        <dbReference type="ChEBI" id="CHEBI:57623"/>
        <dbReference type="ChEBI" id="CHEBI:128753"/>
        <dbReference type="EC" id="1.17.7.4"/>
    </reaction>
</comment>
<comment type="cofactor">
    <cofactor evidence="1">
        <name>[4Fe-4S] cluster</name>
        <dbReference type="ChEBI" id="CHEBI:49883"/>
    </cofactor>
    <text evidence="1">Binds 1 [4Fe-4S] cluster per subunit.</text>
</comment>
<comment type="pathway">
    <text evidence="1">Isoprenoid biosynthesis; dimethylallyl diphosphate biosynthesis; dimethylallyl diphosphate from (2E)-4-hydroxy-3-methylbutenyl diphosphate: step 1/1.</text>
</comment>
<comment type="pathway">
    <text evidence="1">Isoprenoid biosynthesis; isopentenyl diphosphate biosynthesis via DXP pathway; isopentenyl diphosphate from 1-deoxy-D-xylulose 5-phosphate: step 6/6.</text>
</comment>
<comment type="subunit">
    <text evidence="1">Homodimer.</text>
</comment>
<comment type="similarity">
    <text evidence="1">Belongs to the IspH family.</text>
</comment>
<reference key="1">
    <citation type="journal article" date="2000" name="Nature">
        <title>Genome sequence of the endocellular bacterial symbiont of aphids Buchnera sp. APS.</title>
        <authorList>
            <person name="Shigenobu S."/>
            <person name="Watanabe H."/>
            <person name="Hattori M."/>
            <person name="Sakaki Y."/>
            <person name="Ishikawa H."/>
        </authorList>
    </citation>
    <scope>NUCLEOTIDE SEQUENCE [LARGE SCALE GENOMIC DNA]</scope>
    <source>
        <strain>APS</strain>
    </source>
</reference>
<keyword id="KW-0004">4Fe-4S</keyword>
<keyword id="KW-0408">Iron</keyword>
<keyword id="KW-0411">Iron-sulfur</keyword>
<keyword id="KW-0414">Isoprene biosynthesis</keyword>
<keyword id="KW-0479">Metal-binding</keyword>
<keyword id="KW-0560">Oxidoreductase</keyword>
<keyword id="KW-1185">Reference proteome</keyword>
<evidence type="ECO:0000255" key="1">
    <source>
        <dbReference type="HAMAP-Rule" id="MF_00191"/>
    </source>
</evidence>
<dbReference type="EC" id="1.17.7.4" evidence="1"/>
<dbReference type="EMBL" id="BA000003">
    <property type="protein sequence ID" value="BAB12865.1"/>
    <property type="molecule type" value="Genomic_DNA"/>
</dbReference>
<dbReference type="RefSeq" id="NP_239979.1">
    <property type="nucleotide sequence ID" value="NC_002528.1"/>
</dbReference>
<dbReference type="RefSeq" id="WP_009874103.1">
    <property type="nucleotide sequence ID" value="NC_002528.1"/>
</dbReference>
<dbReference type="SMR" id="P57247"/>
<dbReference type="STRING" id="563178.BUAP5A_145"/>
<dbReference type="EnsemblBacteria" id="BAB12865">
    <property type="protein sequence ID" value="BAB12865"/>
    <property type="gene ID" value="BAB12865"/>
</dbReference>
<dbReference type="KEGG" id="buc:BU147"/>
<dbReference type="PATRIC" id="fig|107806.10.peg.156"/>
<dbReference type="eggNOG" id="COG0761">
    <property type="taxonomic scope" value="Bacteria"/>
</dbReference>
<dbReference type="HOGENOM" id="CLU_027486_1_1_6"/>
<dbReference type="UniPathway" id="UPA00056">
    <property type="reaction ID" value="UER00097"/>
</dbReference>
<dbReference type="UniPathway" id="UPA00059">
    <property type="reaction ID" value="UER00105"/>
</dbReference>
<dbReference type="Proteomes" id="UP000001806">
    <property type="component" value="Chromosome"/>
</dbReference>
<dbReference type="GO" id="GO:0051539">
    <property type="term" value="F:4 iron, 4 sulfur cluster binding"/>
    <property type="evidence" value="ECO:0007669"/>
    <property type="project" value="UniProtKB-UniRule"/>
</dbReference>
<dbReference type="GO" id="GO:0051745">
    <property type="term" value="F:4-hydroxy-3-methylbut-2-enyl diphosphate reductase activity"/>
    <property type="evidence" value="ECO:0007669"/>
    <property type="project" value="UniProtKB-UniRule"/>
</dbReference>
<dbReference type="GO" id="GO:0046872">
    <property type="term" value="F:metal ion binding"/>
    <property type="evidence" value="ECO:0007669"/>
    <property type="project" value="UniProtKB-KW"/>
</dbReference>
<dbReference type="GO" id="GO:0050992">
    <property type="term" value="P:dimethylallyl diphosphate biosynthetic process"/>
    <property type="evidence" value="ECO:0007669"/>
    <property type="project" value="UniProtKB-UniRule"/>
</dbReference>
<dbReference type="GO" id="GO:0019288">
    <property type="term" value="P:isopentenyl diphosphate biosynthetic process, methylerythritol 4-phosphate pathway"/>
    <property type="evidence" value="ECO:0007669"/>
    <property type="project" value="UniProtKB-UniRule"/>
</dbReference>
<dbReference type="GO" id="GO:0016114">
    <property type="term" value="P:terpenoid biosynthetic process"/>
    <property type="evidence" value="ECO:0007669"/>
    <property type="project" value="UniProtKB-UniRule"/>
</dbReference>
<dbReference type="CDD" id="cd13944">
    <property type="entry name" value="lytB_ispH"/>
    <property type="match status" value="1"/>
</dbReference>
<dbReference type="Gene3D" id="3.40.50.11270">
    <property type="match status" value="1"/>
</dbReference>
<dbReference type="Gene3D" id="3.40.1010.20">
    <property type="entry name" value="4-hydroxy-3-methylbut-2-enyl diphosphate reductase, catalytic domain"/>
    <property type="match status" value="2"/>
</dbReference>
<dbReference type="HAMAP" id="MF_00191">
    <property type="entry name" value="IspH"/>
    <property type="match status" value="1"/>
</dbReference>
<dbReference type="InterPro" id="IPR003451">
    <property type="entry name" value="LytB/IspH"/>
</dbReference>
<dbReference type="NCBIfam" id="TIGR00216">
    <property type="entry name" value="ispH_lytB"/>
    <property type="match status" value="1"/>
</dbReference>
<dbReference type="NCBIfam" id="NF002188">
    <property type="entry name" value="PRK01045.1-2"/>
    <property type="match status" value="1"/>
</dbReference>
<dbReference type="NCBIfam" id="NF002190">
    <property type="entry name" value="PRK01045.1-4"/>
    <property type="match status" value="1"/>
</dbReference>
<dbReference type="PANTHER" id="PTHR30426">
    <property type="entry name" value="4-HYDROXY-3-METHYLBUT-2-ENYL DIPHOSPHATE REDUCTASE"/>
    <property type="match status" value="1"/>
</dbReference>
<dbReference type="PANTHER" id="PTHR30426:SF0">
    <property type="entry name" value="4-HYDROXY-3-METHYLBUT-2-ENYL DIPHOSPHATE REDUCTASE"/>
    <property type="match status" value="1"/>
</dbReference>
<dbReference type="Pfam" id="PF02401">
    <property type="entry name" value="LYTB"/>
    <property type="match status" value="1"/>
</dbReference>
<accession>P57247</accession>
<proteinExistence type="inferred from homology"/>
<sequence length="319" mass="35741">MNIILTNPRGFCAGVKRAILIVENALKVYKKTIYIRHELVHNQYVINTLRQKGVVFVEKIEQIPDYSVVIFSAHGVSKKVVQEAVKKKLIILDATCPLVEKVHIEVSKSSEKAIETILIGHRGHPEVEGTIGQYNNKNGKIYLVESIEDVHNLSVQNSKKLNFFTQTTLSITNTKKIIAALKNKFPEISGPNKEDICYATTNRQIAVRQLSKIADIIFVIGSNNSSNSNRLAELGKETGTFTKLISSFLDIKKKWLKNVNYIGITAGASAPEILVTEVIQYLRKIGAHKPIEMIGVREKKIFKIPKKLLNIKTILDENG</sequence>
<organism>
    <name type="scientific">Buchnera aphidicola subsp. Acyrthosiphon pisum (strain APS)</name>
    <name type="common">Acyrthosiphon pisum symbiotic bacterium</name>
    <dbReference type="NCBI Taxonomy" id="107806"/>
    <lineage>
        <taxon>Bacteria</taxon>
        <taxon>Pseudomonadati</taxon>
        <taxon>Pseudomonadota</taxon>
        <taxon>Gammaproteobacteria</taxon>
        <taxon>Enterobacterales</taxon>
        <taxon>Erwiniaceae</taxon>
        <taxon>Buchnera</taxon>
    </lineage>
</organism>
<gene>
    <name evidence="1" type="primary">ispH</name>
    <name type="synonym">lytB</name>
    <name type="ordered locus">BU147</name>
</gene>